<gene>
    <name type="primary">pyrD</name>
    <name type="ordered locus">PEPE_0317</name>
</gene>
<dbReference type="EC" id="1.3.98.1"/>
<dbReference type="EMBL" id="CP000422">
    <property type="protein sequence ID" value="ABJ67413.1"/>
    <property type="molecule type" value="Genomic_DNA"/>
</dbReference>
<dbReference type="RefSeq" id="WP_002832748.1">
    <property type="nucleotide sequence ID" value="NC_008525.1"/>
</dbReference>
<dbReference type="SMR" id="Q03HA9"/>
<dbReference type="STRING" id="278197.PEPE_0317"/>
<dbReference type="GeneID" id="33062631"/>
<dbReference type="KEGG" id="ppe:PEPE_0317"/>
<dbReference type="eggNOG" id="COG0167">
    <property type="taxonomic scope" value="Bacteria"/>
</dbReference>
<dbReference type="HOGENOM" id="CLU_042042_0_0_9"/>
<dbReference type="OrthoDB" id="9794954at2"/>
<dbReference type="UniPathway" id="UPA00070"/>
<dbReference type="Proteomes" id="UP000000773">
    <property type="component" value="Chromosome"/>
</dbReference>
<dbReference type="GO" id="GO:0005737">
    <property type="term" value="C:cytoplasm"/>
    <property type="evidence" value="ECO:0007669"/>
    <property type="project" value="UniProtKB-SubCell"/>
</dbReference>
<dbReference type="GO" id="GO:1990663">
    <property type="term" value="F:dihydroorotate dehydrogenase (fumarate) activity"/>
    <property type="evidence" value="ECO:0007669"/>
    <property type="project" value="UniProtKB-EC"/>
</dbReference>
<dbReference type="GO" id="GO:0006207">
    <property type="term" value="P:'de novo' pyrimidine nucleobase biosynthetic process"/>
    <property type="evidence" value="ECO:0007669"/>
    <property type="project" value="InterPro"/>
</dbReference>
<dbReference type="GO" id="GO:0044205">
    <property type="term" value="P:'de novo' UMP biosynthetic process"/>
    <property type="evidence" value="ECO:0007669"/>
    <property type="project" value="UniProtKB-UniRule"/>
</dbReference>
<dbReference type="CDD" id="cd04740">
    <property type="entry name" value="DHOD_1B_like"/>
    <property type="match status" value="1"/>
</dbReference>
<dbReference type="FunFam" id="3.20.20.70:FF:000027">
    <property type="entry name" value="Dihydropyrimidine dehydrogenase [NADP(+)]"/>
    <property type="match status" value="1"/>
</dbReference>
<dbReference type="Gene3D" id="3.20.20.70">
    <property type="entry name" value="Aldolase class I"/>
    <property type="match status" value="1"/>
</dbReference>
<dbReference type="HAMAP" id="MF_00224">
    <property type="entry name" value="DHO_dh_type1"/>
    <property type="match status" value="1"/>
</dbReference>
<dbReference type="InterPro" id="IPR013785">
    <property type="entry name" value="Aldolase_TIM"/>
</dbReference>
<dbReference type="InterPro" id="IPR050074">
    <property type="entry name" value="DHO_dehydrogenase"/>
</dbReference>
<dbReference type="InterPro" id="IPR033888">
    <property type="entry name" value="DHOD_1B"/>
</dbReference>
<dbReference type="InterPro" id="IPR024920">
    <property type="entry name" value="Dihydroorotate_DH_1"/>
</dbReference>
<dbReference type="InterPro" id="IPR012135">
    <property type="entry name" value="Dihydroorotate_DH_1_2"/>
</dbReference>
<dbReference type="InterPro" id="IPR005720">
    <property type="entry name" value="Dihydroorotate_DH_cat"/>
</dbReference>
<dbReference type="InterPro" id="IPR001295">
    <property type="entry name" value="Dihydroorotate_DH_CS"/>
</dbReference>
<dbReference type="InterPro" id="IPR049622">
    <property type="entry name" value="Dihydroorotate_DH_I"/>
</dbReference>
<dbReference type="NCBIfam" id="NF005574">
    <property type="entry name" value="PRK07259.1"/>
    <property type="match status" value="1"/>
</dbReference>
<dbReference type="NCBIfam" id="TIGR01037">
    <property type="entry name" value="pyrD_sub1_fam"/>
    <property type="match status" value="1"/>
</dbReference>
<dbReference type="PANTHER" id="PTHR48109:SF1">
    <property type="entry name" value="DIHYDROOROTATE DEHYDROGENASE (FUMARATE)"/>
    <property type="match status" value="1"/>
</dbReference>
<dbReference type="PANTHER" id="PTHR48109">
    <property type="entry name" value="DIHYDROOROTATE DEHYDROGENASE (QUINONE), MITOCHONDRIAL-RELATED"/>
    <property type="match status" value="1"/>
</dbReference>
<dbReference type="Pfam" id="PF01180">
    <property type="entry name" value="DHO_dh"/>
    <property type="match status" value="1"/>
</dbReference>
<dbReference type="PIRSF" id="PIRSF000164">
    <property type="entry name" value="DHO_oxidase"/>
    <property type="match status" value="1"/>
</dbReference>
<dbReference type="SUPFAM" id="SSF51395">
    <property type="entry name" value="FMN-linked oxidoreductases"/>
    <property type="match status" value="1"/>
</dbReference>
<dbReference type="PROSITE" id="PS00911">
    <property type="entry name" value="DHODEHASE_1"/>
    <property type="match status" value="1"/>
</dbReference>
<dbReference type="PROSITE" id="PS00912">
    <property type="entry name" value="DHODEHASE_2"/>
    <property type="match status" value="1"/>
</dbReference>
<evidence type="ECO:0000250" key="1"/>
<evidence type="ECO:0000305" key="2"/>
<sequence>MDRLETTIAGVKLKSPVMNASGTAAYGQQMAKNIDLNELGAFVIKSTTMEPRAGHPWPTTAATTGGWLNAVGLKNPGIEHVLAYELPWLAENYPDLPIVGSIAGSNPDDYVEVAKRMATAPNVKFIEVNISCPNVAKGGLAFGTDPVVVEDMTRRIKAVVPNKPVFMKLTPGVTEIVPIALAAERGGADGLVMINTLMGMEIDLETRKPRLSNGTGGLSGKAIHPIAVRMIHQVREVTNLPIIGVGGVFSAKDALELMVAGAGAVQVGSANYGNPHACHDIIQGLVPAMDQYHFNNIAEFSSEK</sequence>
<name>PYRDA_PEDPA</name>
<accession>Q03HA9</accession>
<keyword id="KW-0963">Cytoplasm</keyword>
<keyword id="KW-0285">Flavoprotein</keyword>
<keyword id="KW-0288">FMN</keyword>
<keyword id="KW-0560">Oxidoreductase</keyword>
<keyword id="KW-0665">Pyrimidine biosynthesis</keyword>
<reference key="1">
    <citation type="journal article" date="2006" name="Proc. Natl. Acad. Sci. U.S.A.">
        <title>Comparative genomics of the lactic acid bacteria.</title>
        <authorList>
            <person name="Makarova K.S."/>
            <person name="Slesarev A."/>
            <person name="Wolf Y.I."/>
            <person name="Sorokin A."/>
            <person name="Mirkin B."/>
            <person name="Koonin E.V."/>
            <person name="Pavlov A."/>
            <person name="Pavlova N."/>
            <person name="Karamychev V."/>
            <person name="Polouchine N."/>
            <person name="Shakhova V."/>
            <person name="Grigoriev I."/>
            <person name="Lou Y."/>
            <person name="Rohksar D."/>
            <person name="Lucas S."/>
            <person name="Huang K."/>
            <person name="Goodstein D.M."/>
            <person name="Hawkins T."/>
            <person name="Plengvidhya V."/>
            <person name="Welker D."/>
            <person name="Hughes J."/>
            <person name="Goh Y."/>
            <person name="Benson A."/>
            <person name="Baldwin K."/>
            <person name="Lee J.-H."/>
            <person name="Diaz-Muniz I."/>
            <person name="Dosti B."/>
            <person name="Smeianov V."/>
            <person name="Wechter W."/>
            <person name="Barabote R."/>
            <person name="Lorca G."/>
            <person name="Altermann E."/>
            <person name="Barrangou R."/>
            <person name="Ganesan B."/>
            <person name="Xie Y."/>
            <person name="Rawsthorne H."/>
            <person name="Tamir D."/>
            <person name="Parker C."/>
            <person name="Breidt F."/>
            <person name="Broadbent J.R."/>
            <person name="Hutkins R."/>
            <person name="O'Sullivan D."/>
            <person name="Steele J."/>
            <person name="Unlu G."/>
            <person name="Saier M.H. Jr."/>
            <person name="Klaenhammer T."/>
            <person name="Richardson P."/>
            <person name="Kozyavkin S."/>
            <person name="Weimer B.C."/>
            <person name="Mills D.A."/>
        </authorList>
    </citation>
    <scope>NUCLEOTIDE SEQUENCE [LARGE SCALE GENOMIC DNA]</scope>
    <source>
        <strain>ATCC 25745 / CCUG 21536 / LMG 10740 / 183-1w</strain>
    </source>
</reference>
<proteinExistence type="inferred from homology"/>
<protein>
    <recommendedName>
        <fullName>Putative dihydroorotate dehydrogenase A (fumarate)</fullName>
        <shortName>DHOD A</shortName>
        <shortName>DHODase A</shortName>
        <shortName>DHOdehase A</shortName>
        <ecNumber>1.3.98.1</ecNumber>
    </recommendedName>
</protein>
<organism>
    <name type="scientific">Pediococcus pentosaceus (strain ATCC 25745 / CCUG 21536 / LMG 10740 / 183-1w)</name>
    <dbReference type="NCBI Taxonomy" id="278197"/>
    <lineage>
        <taxon>Bacteria</taxon>
        <taxon>Bacillati</taxon>
        <taxon>Bacillota</taxon>
        <taxon>Bacilli</taxon>
        <taxon>Lactobacillales</taxon>
        <taxon>Lactobacillaceae</taxon>
        <taxon>Pediococcus</taxon>
    </lineage>
</organism>
<feature type="chain" id="PRO_1000024140" description="Putative dihydroorotate dehydrogenase A (fumarate)">
    <location>
        <begin position="1"/>
        <end position="304"/>
    </location>
</feature>
<feature type="active site" description="Nucleophile">
    <location>
        <position position="132"/>
    </location>
</feature>
<feature type="binding site" evidence="1">
    <location>
        <position position="21"/>
    </location>
    <ligand>
        <name>FMN</name>
        <dbReference type="ChEBI" id="CHEBI:58210"/>
    </ligand>
</feature>
<feature type="binding site" evidence="1">
    <location>
        <begin position="45"/>
        <end position="46"/>
    </location>
    <ligand>
        <name>FMN</name>
        <dbReference type="ChEBI" id="CHEBI:58210"/>
    </ligand>
</feature>
<feature type="binding site" evidence="1">
    <location>
        <position position="45"/>
    </location>
    <ligand>
        <name>substrate</name>
    </ligand>
</feature>
<feature type="binding site" evidence="1">
    <location>
        <begin position="69"/>
        <end position="73"/>
    </location>
    <ligand>
        <name>substrate</name>
    </ligand>
</feature>
<feature type="binding site" evidence="1">
    <location>
        <position position="129"/>
    </location>
    <ligand>
        <name>FMN</name>
        <dbReference type="ChEBI" id="CHEBI:58210"/>
    </ligand>
</feature>
<feature type="binding site" evidence="1">
    <location>
        <position position="129"/>
    </location>
    <ligand>
        <name>substrate</name>
    </ligand>
</feature>
<feature type="binding site" evidence="1">
    <location>
        <position position="168"/>
    </location>
    <ligand>
        <name>FMN</name>
        <dbReference type="ChEBI" id="CHEBI:58210"/>
    </ligand>
</feature>
<feature type="binding site" evidence="1">
    <location>
        <position position="194"/>
    </location>
    <ligand>
        <name>FMN</name>
        <dbReference type="ChEBI" id="CHEBI:58210"/>
    </ligand>
</feature>
<feature type="binding site" evidence="1">
    <location>
        <begin position="195"/>
        <end position="196"/>
    </location>
    <ligand>
        <name>substrate</name>
    </ligand>
</feature>
<feature type="binding site" evidence="1">
    <location>
        <position position="220"/>
    </location>
    <ligand>
        <name>FMN</name>
        <dbReference type="ChEBI" id="CHEBI:58210"/>
    </ligand>
</feature>
<feature type="binding site" evidence="1">
    <location>
        <begin position="246"/>
        <end position="247"/>
    </location>
    <ligand>
        <name>FMN</name>
        <dbReference type="ChEBI" id="CHEBI:58210"/>
    </ligand>
</feature>
<feature type="binding site" evidence="1">
    <location>
        <begin position="268"/>
        <end position="269"/>
    </location>
    <ligand>
        <name>FMN</name>
        <dbReference type="ChEBI" id="CHEBI:58210"/>
    </ligand>
</feature>
<comment type="function">
    <text evidence="1">Catalyzes the conversion of dihydroorotate to orotate with fumarate as the electron acceptor.</text>
</comment>
<comment type="catalytic activity">
    <reaction>
        <text>(S)-dihydroorotate + fumarate = orotate + succinate</text>
        <dbReference type="Rhea" id="RHEA:30059"/>
        <dbReference type="ChEBI" id="CHEBI:29806"/>
        <dbReference type="ChEBI" id="CHEBI:30031"/>
        <dbReference type="ChEBI" id="CHEBI:30839"/>
        <dbReference type="ChEBI" id="CHEBI:30864"/>
        <dbReference type="EC" id="1.3.98.1"/>
    </reaction>
</comment>
<comment type="cofactor">
    <cofactor evidence="1">
        <name>FMN</name>
        <dbReference type="ChEBI" id="CHEBI:58210"/>
    </cofactor>
    <text evidence="1">Binds 1 FMN per subunit.</text>
</comment>
<comment type="pathway">
    <text>Pyrimidine metabolism; UMP biosynthesis via de novo pathway.</text>
</comment>
<comment type="subunit">
    <text evidence="1">Homodimer.</text>
</comment>
<comment type="subcellular location">
    <subcellularLocation>
        <location evidence="1">Cytoplasm</location>
    </subcellularLocation>
</comment>
<comment type="similarity">
    <text evidence="2">Belongs to the dihydroorotate dehydrogenase family. Type 1 subfamily.</text>
</comment>